<proteinExistence type="inferred from homology"/>
<dbReference type="EC" id="2.1.1.192" evidence="1"/>
<dbReference type="EMBL" id="BA000028">
    <property type="protein sequence ID" value="BAC15053.1"/>
    <property type="molecule type" value="Genomic_DNA"/>
</dbReference>
<dbReference type="RefSeq" id="WP_011067494.1">
    <property type="nucleotide sequence ID" value="NC_004193.1"/>
</dbReference>
<dbReference type="SMR" id="Q8ELW7"/>
<dbReference type="STRING" id="221109.gene:10735349"/>
<dbReference type="KEGG" id="oih:OB3097"/>
<dbReference type="eggNOG" id="COG0820">
    <property type="taxonomic scope" value="Bacteria"/>
</dbReference>
<dbReference type="HOGENOM" id="CLU_029101_0_1_9"/>
<dbReference type="OrthoDB" id="9793973at2"/>
<dbReference type="PhylomeDB" id="Q8ELW7"/>
<dbReference type="Proteomes" id="UP000000822">
    <property type="component" value="Chromosome"/>
</dbReference>
<dbReference type="GO" id="GO:0005737">
    <property type="term" value="C:cytoplasm"/>
    <property type="evidence" value="ECO:0007669"/>
    <property type="project" value="UniProtKB-SubCell"/>
</dbReference>
<dbReference type="GO" id="GO:0051539">
    <property type="term" value="F:4 iron, 4 sulfur cluster binding"/>
    <property type="evidence" value="ECO:0007669"/>
    <property type="project" value="UniProtKB-UniRule"/>
</dbReference>
<dbReference type="GO" id="GO:0046872">
    <property type="term" value="F:metal ion binding"/>
    <property type="evidence" value="ECO:0007669"/>
    <property type="project" value="UniProtKB-KW"/>
</dbReference>
<dbReference type="GO" id="GO:0070040">
    <property type="term" value="F:rRNA (adenine(2503)-C2-)-methyltransferase activity"/>
    <property type="evidence" value="ECO:0007669"/>
    <property type="project" value="UniProtKB-UniRule"/>
</dbReference>
<dbReference type="GO" id="GO:0019843">
    <property type="term" value="F:rRNA binding"/>
    <property type="evidence" value="ECO:0007669"/>
    <property type="project" value="UniProtKB-UniRule"/>
</dbReference>
<dbReference type="GO" id="GO:0002935">
    <property type="term" value="F:tRNA (adenine(37)-C2)-methyltransferase activity"/>
    <property type="evidence" value="ECO:0007669"/>
    <property type="project" value="UniProtKB-UniRule"/>
</dbReference>
<dbReference type="GO" id="GO:0000049">
    <property type="term" value="F:tRNA binding"/>
    <property type="evidence" value="ECO:0007669"/>
    <property type="project" value="UniProtKB-UniRule"/>
</dbReference>
<dbReference type="GO" id="GO:0070475">
    <property type="term" value="P:rRNA base methylation"/>
    <property type="evidence" value="ECO:0007669"/>
    <property type="project" value="UniProtKB-UniRule"/>
</dbReference>
<dbReference type="GO" id="GO:0030488">
    <property type="term" value="P:tRNA methylation"/>
    <property type="evidence" value="ECO:0007669"/>
    <property type="project" value="UniProtKB-UniRule"/>
</dbReference>
<dbReference type="CDD" id="cd01335">
    <property type="entry name" value="Radical_SAM"/>
    <property type="match status" value="1"/>
</dbReference>
<dbReference type="FunFam" id="3.20.20.70:FF:000014">
    <property type="entry name" value="Probable dual-specificity RNA methyltransferase RlmN"/>
    <property type="match status" value="1"/>
</dbReference>
<dbReference type="Gene3D" id="1.10.150.530">
    <property type="match status" value="1"/>
</dbReference>
<dbReference type="Gene3D" id="3.20.20.70">
    <property type="entry name" value="Aldolase class I"/>
    <property type="match status" value="1"/>
</dbReference>
<dbReference type="HAMAP" id="MF_01849">
    <property type="entry name" value="RNA_methyltr_RlmN"/>
    <property type="match status" value="1"/>
</dbReference>
<dbReference type="InterPro" id="IPR013785">
    <property type="entry name" value="Aldolase_TIM"/>
</dbReference>
<dbReference type="InterPro" id="IPR040072">
    <property type="entry name" value="Methyltransferase_A"/>
</dbReference>
<dbReference type="InterPro" id="IPR048641">
    <property type="entry name" value="RlmN_N"/>
</dbReference>
<dbReference type="InterPro" id="IPR027492">
    <property type="entry name" value="RNA_MTrfase_RlmN"/>
</dbReference>
<dbReference type="InterPro" id="IPR004383">
    <property type="entry name" value="rRNA_lsu_MTrfase_RlmN/Cfr"/>
</dbReference>
<dbReference type="InterPro" id="IPR007197">
    <property type="entry name" value="rSAM"/>
</dbReference>
<dbReference type="NCBIfam" id="TIGR00048">
    <property type="entry name" value="rRNA_mod_RlmN"/>
    <property type="match status" value="1"/>
</dbReference>
<dbReference type="PANTHER" id="PTHR30544">
    <property type="entry name" value="23S RRNA METHYLTRANSFERASE"/>
    <property type="match status" value="1"/>
</dbReference>
<dbReference type="PANTHER" id="PTHR30544:SF5">
    <property type="entry name" value="RADICAL SAM CORE DOMAIN-CONTAINING PROTEIN"/>
    <property type="match status" value="1"/>
</dbReference>
<dbReference type="Pfam" id="PF04055">
    <property type="entry name" value="Radical_SAM"/>
    <property type="match status" value="1"/>
</dbReference>
<dbReference type="Pfam" id="PF21016">
    <property type="entry name" value="RlmN_N"/>
    <property type="match status" value="1"/>
</dbReference>
<dbReference type="PIRSF" id="PIRSF006004">
    <property type="entry name" value="CHP00048"/>
    <property type="match status" value="1"/>
</dbReference>
<dbReference type="SFLD" id="SFLDF00275">
    <property type="entry name" value="adenosine_C2_methyltransferase"/>
    <property type="match status" value="1"/>
</dbReference>
<dbReference type="SFLD" id="SFLDG01062">
    <property type="entry name" value="methyltransferase_(Class_A)"/>
    <property type="match status" value="1"/>
</dbReference>
<dbReference type="SUPFAM" id="SSF102114">
    <property type="entry name" value="Radical SAM enzymes"/>
    <property type="match status" value="1"/>
</dbReference>
<dbReference type="PROSITE" id="PS51918">
    <property type="entry name" value="RADICAL_SAM"/>
    <property type="match status" value="1"/>
</dbReference>
<evidence type="ECO:0000255" key="1">
    <source>
        <dbReference type="HAMAP-Rule" id="MF_01849"/>
    </source>
</evidence>
<evidence type="ECO:0000255" key="2">
    <source>
        <dbReference type="PROSITE-ProRule" id="PRU01266"/>
    </source>
</evidence>
<comment type="function">
    <text evidence="1">Specifically methylates position 2 of adenine 2503 in 23S rRNA and position 2 of adenine 37 in tRNAs.</text>
</comment>
<comment type="catalytic activity">
    <reaction evidence="1">
        <text>adenosine(2503) in 23S rRNA + 2 reduced [2Fe-2S]-[ferredoxin] + 2 S-adenosyl-L-methionine = 2-methyladenosine(2503) in 23S rRNA + 5'-deoxyadenosine + L-methionine + 2 oxidized [2Fe-2S]-[ferredoxin] + S-adenosyl-L-homocysteine</text>
        <dbReference type="Rhea" id="RHEA:42916"/>
        <dbReference type="Rhea" id="RHEA-COMP:10000"/>
        <dbReference type="Rhea" id="RHEA-COMP:10001"/>
        <dbReference type="Rhea" id="RHEA-COMP:10152"/>
        <dbReference type="Rhea" id="RHEA-COMP:10282"/>
        <dbReference type="ChEBI" id="CHEBI:17319"/>
        <dbReference type="ChEBI" id="CHEBI:33737"/>
        <dbReference type="ChEBI" id="CHEBI:33738"/>
        <dbReference type="ChEBI" id="CHEBI:57844"/>
        <dbReference type="ChEBI" id="CHEBI:57856"/>
        <dbReference type="ChEBI" id="CHEBI:59789"/>
        <dbReference type="ChEBI" id="CHEBI:74411"/>
        <dbReference type="ChEBI" id="CHEBI:74497"/>
        <dbReference type="EC" id="2.1.1.192"/>
    </reaction>
</comment>
<comment type="catalytic activity">
    <reaction evidence="1">
        <text>adenosine(37) in tRNA + 2 reduced [2Fe-2S]-[ferredoxin] + 2 S-adenosyl-L-methionine = 2-methyladenosine(37) in tRNA + 5'-deoxyadenosine + L-methionine + 2 oxidized [2Fe-2S]-[ferredoxin] + S-adenosyl-L-homocysteine</text>
        <dbReference type="Rhea" id="RHEA:43332"/>
        <dbReference type="Rhea" id="RHEA-COMP:10000"/>
        <dbReference type="Rhea" id="RHEA-COMP:10001"/>
        <dbReference type="Rhea" id="RHEA-COMP:10162"/>
        <dbReference type="Rhea" id="RHEA-COMP:10485"/>
        <dbReference type="ChEBI" id="CHEBI:17319"/>
        <dbReference type="ChEBI" id="CHEBI:33737"/>
        <dbReference type="ChEBI" id="CHEBI:33738"/>
        <dbReference type="ChEBI" id="CHEBI:57844"/>
        <dbReference type="ChEBI" id="CHEBI:57856"/>
        <dbReference type="ChEBI" id="CHEBI:59789"/>
        <dbReference type="ChEBI" id="CHEBI:74411"/>
        <dbReference type="ChEBI" id="CHEBI:74497"/>
        <dbReference type="EC" id="2.1.1.192"/>
    </reaction>
</comment>
<comment type="cofactor">
    <cofactor evidence="1">
        <name>[4Fe-4S] cluster</name>
        <dbReference type="ChEBI" id="CHEBI:49883"/>
    </cofactor>
    <text evidence="1">Binds 1 [4Fe-4S] cluster. The cluster is coordinated with 3 cysteines and an exchangeable S-adenosyl-L-methionine.</text>
</comment>
<comment type="subcellular location">
    <subcellularLocation>
        <location evidence="1">Cytoplasm</location>
    </subcellularLocation>
</comment>
<comment type="miscellaneous">
    <text evidence="1">Reaction proceeds by a ping-pong mechanism involving intermediate methylation of a conserved cysteine residue.</text>
</comment>
<comment type="similarity">
    <text evidence="1">Belongs to the radical SAM superfamily. RlmN family.</text>
</comment>
<sequence>MSKSSIYGLTYEKLKDWLIEHGEKRFRAEQVWNWLYKKRINSFDEMNNVNQSAIQLLKDNFVLHTMGEEIRQESQDGTIKFLFKLEDGNLIETVLMRFHYGLSVCVTTQVGCNIGCTFCASGLLRKSRDLSSGEVVEQIMNVQKHLDERGEKDRVSHIVVMGIGEPFDNYNNLMDFLYTVNDDRGLNIGARHITVSTSGLAHKIYEFADDPIQVNLAISLHAPNDELRTKIMKINRAFPIDKLMKSVDYYLQKKNRRITYEYIMLDDVNDHKKEAIELANLIKNHRHLAYVNLIPYNTVDEHIDYRRSKSENIQAFYETLTELGINCGVRWENGADIDAACGQLRSKQIKKSKAV</sequence>
<organism>
    <name type="scientific">Oceanobacillus iheyensis (strain DSM 14371 / CIP 107618 / JCM 11309 / KCTC 3954 / HTE831)</name>
    <dbReference type="NCBI Taxonomy" id="221109"/>
    <lineage>
        <taxon>Bacteria</taxon>
        <taxon>Bacillati</taxon>
        <taxon>Bacillota</taxon>
        <taxon>Bacilli</taxon>
        <taxon>Bacillales</taxon>
        <taxon>Bacillaceae</taxon>
        <taxon>Oceanobacillus</taxon>
    </lineage>
</organism>
<feature type="chain" id="PRO_0000350292" description="Probable dual-specificity RNA methyltransferase RlmN">
    <location>
        <begin position="1"/>
        <end position="355"/>
    </location>
</feature>
<feature type="domain" description="Radical SAM core" evidence="2">
    <location>
        <begin position="98"/>
        <end position="330"/>
    </location>
</feature>
<feature type="active site" description="Proton acceptor" evidence="1">
    <location>
        <position position="92"/>
    </location>
</feature>
<feature type="active site" description="S-methylcysteine intermediate" evidence="1">
    <location>
        <position position="341"/>
    </location>
</feature>
<feature type="binding site" evidence="1">
    <location>
        <position position="112"/>
    </location>
    <ligand>
        <name>[4Fe-4S] cluster</name>
        <dbReference type="ChEBI" id="CHEBI:49883"/>
        <note>4Fe-4S-S-AdoMet</note>
    </ligand>
</feature>
<feature type="binding site" evidence="1">
    <location>
        <position position="116"/>
    </location>
    <ligand>
        <name>[4Fe-4S] cluster</name>
        <dbReference type="ChEBI" id="CHEBI:49883"/>
        <note>4Fe-4S-S-AdoMet</note>
    </ligand>
</feature>
<feature type="binding site" evidence="1">
    <location>
        <position position="119"/>
    </location>
    <ligand>
        <name>[4Fe-4S] cluster</name>
        <dbReference type="ChEBI" id="CHEBI:49883"/>
        <note>4Fe-4S-S-AdoMet</note>
    </ligand>
</feature>
<feature type="binding site" evidence="1">
    <location>
        <begin position="164"/>
        <end position="165"/>
    </location>
    <ligand>
        <name>S-adenosyl-L-methionine</name>
        <dbReference type="ChEBI" id="CHEBI:59789"/>
    </ligand>
</feature>
<feature type="binding site" evidence="1">
    <location>
        <position position="196"/>
    </location>
    <ligand>
        <name>S-adenosyl-L-methionine</name>
        <dbReference type="ChEBI" id="CHEBI:59789"/>
    </ligand>
</feature>
<feature type="binding site" evidence="1">
    <location>
        <begin position="219"/>
        <end position="221"/>
    </location>
    <ligand>
        <name>S-adenosyl-L-methionine</name>
        <dbReference type="ChEBI" id="CHEBI:59789"/>
    </ligand>
</feature>
<feature type="binding site" evidence="1">
    <location>
        <position position="297"/>
    </location>
    <ligand>
        <name>S-adenosyl-L-methionine</name>
        <dbReference type="ChEBI" id="CHEBI:59789"/>
    </ligand>
</feature>
<feature type="disulfide bond" description="(transient)" evidence="1">
    <location>
        <begin position="105"/>
        <end position="341"/>
    </location>
</feature>
<protein>
    <recommendedName>
        <fullName evidence="1">Probable dual-specificity RNA methyltransferase RlmN</fullName>
        <ecNumber evidence="1">2.1.1.192</ecNumber>
    </recommendedName>
    <alternativeName>
        <fullName evidence="1">23S rRNA (adenine(2503)-C(2))-methyltransferase</fullName>
    </alternativeName>
    <alternativeName>
        <fullName evidence="1">23S rRNA m2A2503 methyltransferase</fullName>
    </alternativeName>
    <alternativeName>
        <fullName evidence="1">Ribosomal RNA large subunit methyltransferase N</fullName>
    </alternativeName>
    <alternativeName>
        <fullName evidence="1">tRNA (adenine(37)-C(2))-methyltransferase</fullName>
    </alternativeName>
    <alternativeName>
        <fullName evidence="1">tRNA m2A37 methyltransferase</fullName>
    </alternativeName>
</protein>
<name>RLMN_OCEIH</name>
<accession>Q8ELW7</accession>
<gene>
    <name evidence="1" type="primary">rlmN</name>
    <name type="ordered locus">OB3097</name>
</gene>
<reference key="1">
    <citation type="journal article" date="2002" name="Nucleic Acids Res.">
        <title>Genome sequence of Oceanobacillus iheyensis isolated from the Iheya Ridge and its unexpected adaptive capabilities to extreme environments.</title>
        <authorList>
            <person name="Takami H."/>
            <person name="Takaki Y."/>
            <person name="Uchiyama I."/>
        </authorList>
    </citation>
    <scope>NUCLEOTIDE SEQUENCE [LARGE SCALE GENOMIC DNA]</scope>
    <source>
        <strain>DSM 14371 / CIP 107618 / JCM 11309 / KCTC 3954 / HTE831</strain>
    </source>
</reference>
<keyword id="KW-0004">4Fe-4S</keyword>
<keyword id="KW-0963">Cytoplasm</keyword>
<keyword id="KW-1015">Disulfide bond</keyword>
<keyword id="KW-0408">Iron</keyword>
<keyword id="KW-0411">Iron-sulfur</keyword>
<keyword id="KW-0479">Metal-binding</keyword>
<keyword id="KW-0489">Methyltransferase</keyword>
<keyword id="KW-1185">Reference proteome</keyword>
<keyword id="KW-0698">rRNA processing</keyword>
<keyword id="KW-0949">S-adenosyl-L-methionine</keyword>
<keyword id="KW-0808">Transferase</keyword>
<keyword id="KW-0819">tRNA processing</keyword>